<feature type="chain" id="PRO_0000376583" description="Probable cell division protein WhiA">
    <location>
        <begin position="1"/>
        <end position="303"/>
    </location>
</feature>
<feature type="DNA-binding region" description="H-T-H motif" evidence="1">
    <location>
        <begin position="272"/>
        <end position="303"/>
    </location>
</feature>
<organism>
    <name type="scientific">Streptococcus pyogenes serotype M12 (strain MGAS2096)</name>
    <dbReference type="NCBI Taxonomy" id="370553"/>
    <lineage>
        <taxon>Bacteria</taxon>
        <taxon>Bacillati</taxon>
        <taxon>Bacillota</taxon>
        <taxon>Bacilli</taxon>
        <taxon>Lactobacillales</taxon>
        <taxon>Streptococcaceae</taxon>
        <taxon>Streptococcus</taxon>
    </lineage>
</organism>
<proteinExistence type="inferred from homology"/>
<dbReference type="EMBL" id="CP000261">
    <property type="protein sequence ID" value="ABF35604.1"/>
    <property type="molecule type" value="Genomic_DNA"/>
</dbReference>
<dbReference type="SMR" id="Q1JCQ4"/>
<dbReference type="KEGG" id="spj:MGAS2096_Spy0552"/>
<dbReference type="HOGENOM" id="CLU_053282_0_0_9"/>
<dbReference type="GO" id="GO:0003677">
    <property type="term" value="F:DNA binding"/>
    <property type="evidence" value="ECO:0007669"/>
    <property type="project" value="UniProtKB-UniRule"/>
</dbReference>
<dbReference type="GO" id="GO:0051301">
    <property type="term" value="P:cell division"/>
    <property type="evidence" value="ECO:0007669"/>
    <property type="project" value="UniProtKB-UniRule"/>
</dbReference>
<dbReference type="GO" id="GO:0043937">
    <property type="term" value="P:regulation of sporulation"/>
    <property type="evidence" value="ECO:0007669"/>
    <property type="project" value="InterPro"/>
</dbReference>
<dbReference type="Gene3D" id="3.10.28.10">
    <property type="entry name" value="Homing endonucleases"/>
    <property type="match status" value="1"/>
</dbReference>
<dbReference type="HAMAP" id="MF_01420">
    <property type="entry name" value="HTH_type_WhiA"/>
    <property type="match status" value="1"/>
</dbReference>
<dbReference type="InterPro" id="IPR027434">
    <property type="entry name" value="Homing_endonucl"/>
</dbReference>
<dbReference type="InterPro" id="IPR018478">
    <property type="entry name" value="Sporu_reg_WhiA_N_dom"/>
</dbReference>
<dbReference type="InterPro" id="IPR003802">
    <property type="entry name" value="Sporulation_regulator_WhiA"/>
</dbReference>
<dbReference type="InterPro" id="IPR023054">
    <property type="entry name" value="Sporulation_regulator_WhiA_C"/>
</dbReference>
<dbReference type="InterPro" id="IPR039518">
    <property type="entry name" value="WhiA_LAGLIDADG_dom"/>
</dbReference>
<dbReference type="NCBIfam" id="TIGR00647">
    <property type="entry name" value="DNA_bind_WhiA"/>
    <property type="match status" value="1"/>
</dbReference>
<dbReference type="PANTHER" id="PTHR37307">
    <property type="entry name" value="CELL DIVISION PROTEIN WHIA-RELATED"/>
    <property type="match status" value="1"/>
</dbReference>
<dbReference type="PANTHER" id="PTHR37307:SF1">
    <property type="entry name" value="CELL DIVISION PROTEIN WHIA-RELATED"/>
    <property type="match status" value="1"/>
</dbReference>
<dbReference type="Pfam" id="PF02650">
    <property type="entry name" value="HTH_WhiA"/>
    <property type="match status" value="1"/>
</dbReference>
<dbReference type="Pfam" id="PF14527">
    <property type="entry name" value="LAGLIDADG_WhiA"/>
    <property type="match status" value="1"/>
</dbReference>
<dbReference type="Pfam" id="PF10298">
    <property type="entry name" value="WhiA_N"/>
    <property type="match status" value="1"/>
</dbReference>
<dbReference type="SUPFAM" id="SSF55608">
    <property type="entry name" value="Homing endonucleases"/>
    <property type="match status" value="1"/>
</dbReference>
<gene>
    <name evidence="1" type="primary">whiA</name>
    <name type="ordered locus">MGAS2096_Spy0552</name>
</gene>
<keyword id="KW-0131">Cell cycle</keyword>
<keyword id="KW-0132">Cell division</keyword>
<keyword id="KW-0238">DNA-binding</keyword>
<reference key="1">
    <citation type="journal article" date="2006" name="Proc. Natl. Acad. Sci. U.S.A.">
        <title>Molecular genetic anatomy of inter- and intraserotype variation in the human bacterial pathogen group A Streptococcus.</title>
        <authorList>
            <person name="Beres S.B."/>
            <person name="Richter E.W."/>
            <person name="Nagiec M.J."/>
            <person name="Sumby P."/>
            <person name="Porcella S.F."/>
            <person name="DeLeo F.R."/>
            <person name="Musser J.M."/>
        </authorList>
    </citation>
    <scope>NUCLEOTIDE SEQUENCE [LARGE SCALE GENOMIC DNA]</scope>
    <source>
        <strain>MGAS2096</strain>
    </source>
</reference>
<sequence length="303" mass="33901">MSFTTKVKEELIHLSTGDNNELAAIIKLSGSLGLAHQSLHLSITTENAKIARYIYSLIEDAYVIVPEIRYHQKTNLRKNRVYTVYVEQGVETILADLKLADSFFGLETGIEPQVLSDDNAGRSYLKGAFLAAGSIRDPESGKYQLEIYSVYLDHAQDLAQLMQKFMLDAKTIEHKSGAVTYVQKAEDIMDFLIIIGAMSCKEDFEAIKLLREARNDINRANNAETANIAKTISASMKTINNIIKIMDTIGLESLPIELQQVAQLRVKHPDYSIQQVADALEFPITKSGVNHRLRKINKIADDL</sequence>
<name>WHIA_STRPB</name>
<protein>
    <recommendedName>
        <fullName evidence="1">Probable cell division protein WhiA</fullName>
    </recommendedName>
</protein>
<comment type="function">
    <text evidence="1">Involved in cell division and chromosome segregation.</text>
</comment>
<comment type="similarity">
    <text evidence="1">Belongs to the WhiA family.</text>
</comment>
<evidence type="ECO:0000255" key="1">
    <source>
        <dbReference type="HAMAP-Rule" id="MF_01420"/>
    </source>
</evidence>
<accession>Q1JCQ4</accession>